<protein>
    <recommendedName>
        <fullName>Uncharacterized protein in bpoA1 3'region</fullName>
    </recommendedName>
    <alternativeName>
        <fullName>ORF1</fullName>
    </alternativeName>
</protein>
<name>YBP1_KITAU</name>
<dbReference type="EMBL" id="U01096">
    <property type="protein sequence ID" value="AAC43254.1"/>
    <property type="molecule type" value="Genomic_DNA"/>
</dbReference>
<dbReference type="PIR" id="S59930">
    <property type="entry name" value="S59930"/>
</dbReference>
<dbReference type="SMR" id="P49320"/>
<dbReference type="eggNOG" id="COG3409">
    <property type="taxonomic scope" value="Bacteria"/>
</dbReference>
<dbReference type="Gene3D" id="1.10.101.10">
    <property type="entry name" value="PGBD-like superfamily/PGBD"/>
    <property type="match status" value="1"/>
</dbReference>
<dbReference type="InterPro" id="IPR002477">
    <property type="entry name" value="Peptidoglycan-bd-like"/>
</dbReference>
<dbReference type="InterPro" id="IPR036365">
    <property type="entry name" value="PGBD-like_sf"/>
</dbReference>
<dbReference type="InterPro" id="IPR036366">
    <property type="entry name" value="PGBDSf"/>
</dbReference>
<dbReference type="Pfam" id="PF01471">
    <property type="entry name" value="PG_binding_1"/>
    <property type="match status" value="1"/>
</dbReference>
<dbReference type="SUPFAM" id="SSF47090">
    <property type="entry name" value="PGBD-like"/>
    <property type="match status" value="1"/>
</dbReference>
<accession>P49320</accession>
<organism>
    <name type="scientific">Kitasatospora aureofaciens</name>
    <name type="common">Streptomyces aureofaciens</name>
    <dbReference type="NCBI Taxonomy" id="1894"/>
    <lineage>
        <taxon>Bacteria</taxon>
        <taxon>Bacillati</taxon>
        <taxon>Actinomycetota</taxon>
        <taxon>Actinomycetes</taxon>
        <taxon>Kitasatosporales</taxon>
        <taxon>Streptomycetaceae</taxon>
        <taxon>Kitasatospora</taxon>
    </lineage>
</organism>
<proteinExistence type="predicted"/>
<reference key="1">
    <citation type="journal article" date="1994" name="Microbiology">
        <title>Cloning of a second non-haem bromoperoxidase gene from Streptomyces aureofaciens ATCC 10762: sequence analysis, expression in Streptomyces lividans and enzyme purification.</title>
        <authorList>
            <person name="Pelletier I."/>
            <person name="Pfeifer O."/>
            <person name="Altenbuchner J."/>
            <person name="van Pee K.-P."/>
        </authorList>
    </citation>
    <scope>NUCLEOTIDE SEQUENCE [GENOMIC DNA]</scope>
    <source>
        <strain>ATCC 10762 / DSM 40127 / CCM 3239 / JCM 4008 / LMG 5968 / NBRC 12843 / NCIMB 8234 / A-377</strain>
    </source>
</reference>
<sequence>KLAAVAVATLLAAGFGVTTAGSASAATSPSQLCGGYSTSEPMLSQDDSGDAVKALQCELYNSLAYMGPDVDGYFGPKTLAAVQKFQTCTGLKPDGIVGPLTWAKLDYQSSQGTTPVWC</sequence>
<feature type="chain" id="PRO_0000066149" description="Uncharacterized protein in bpoA1 3'region">
    <location>
        <begin position="1" status="less than"/>
        <end position="118"/>
    </location>
</feature>
<feature type="non-terminal residue">
    <location>
        <position position="1"/>
    </location>
</feature>